<feature type="chain" id="PRO_0000356486" description="Large ribosomal subunit protein bL33">
    <location>
        <begin position="1"/>
        <end position="51"/>
    </location>
</feature>
<keyword id="KW-1185">Reference proteome</keyword>
<keyword id="KW-0687">Ribonucleoprotein</keyword>
<keyword id="KW-0689">Ribosomal protein</keyword>
<name>RL33_IDILO</name>
<gene>
    <name evidence="1" type="primary">rpmG</name>
    <name type="ordered locus">IL0242</name>
</gene>
<accession>Q5QZC4</accession>
<sequence>MRDKIRLVSSAGTGYFYTTDKNKRTMPEKMEIKKFDPVVRKHVIFKEAKIK</sequence>
<dbReference type="EMBL" id="AE017340">
    <property type="protein sequence ID" value="AAV81085.1"/>
    <property type="molecule type" value="Genomic_DNA"/>
</dbReference>
<dbReference type="RefSeq" id="WP_006953863.1">
    <property type="nucleotide sequence ID" value="NC_006512.1"/>
</dbReference>
<dbReference type="SMR" id="Q5QZC4"/>
<dbReference type="STRING" id="283942.IL0242"/>
<dbReference type="GeneID" id="78251047"/>
<dbReference type="KEGG" id="ilo:IL0242"/>
<dbReference type="eggNOG" id="COG0267">
    <property type="taxonomic scope" value="Bacteria"/>
</dbReference>
<dbReference type="HOGENOM" id="CLU_190949_1_1_6"/>
<dbReference type="OrthoDB" id="21586at2"/>
<dbReference type="Proteomes" id="UP000001171">
    <property type="component" value="Chromosome"/>
</dbReference>
<dbReference type="GO" id="GO:0022625">
    <property type="term" value="C:cytosolic large ribosomal subunit"/>
    <property type="evidence" value="ECO:0007669"/>
    <property type="project" value="TreeGrafter"/>
</dbReference>
<dbReference type="GO" id="GO:0003735">
    <property type="term" value="F:structural constituent of ribosome"/>
    <property type="evidence" value="ECO:0007669"/>
    <property type="project" value="InterPro"/>
</dbReference>
<dbReference type="GO" id="GO:0006412">
    <property type="term" value="P:translation"/>
    <property type="evidence" value="ECO:0007669"/>
    <property type="project" value="UniProtKB-UniRule"/>
</dbReference>
<dbReference type="FunFam" id="2.20.28.120:FF:000001">
    <property type="entry name" value="50S ribosomal protein L33"/>
    <property type="match status" value="1"/>
</dbReference>
<dbReference type="Gene3D" id="2.20.28.120">
    <property type="entry name" value="Ribosomal protein L33"/>
    <property type="match status" value="1"/>
</dbReference>
<dbReference type="HAMAP" id="MF_00294">
    <property type="entry name" value="Ribosomal_bL33"/>
    <property type="match status" value="1"/>
</dbReference>
<dbReference type="InterPro" id="IPR001705">
    <property type="entry name" value="Ribosomal_bL33"/>
</dbReference>
<dbReference type="InterPro" id="IPR018264">
    <property type="entry name" value="Ribosomal_bL33_CS"/>
</dbReference>
<dbReference type="InterPro" id="IPR038584">
    <property type="entry name" value="Ribosomal_bL33_sf"/>
</dbReference>
<dbReference type="InterPro" id="IPR011332">
    <property type="entry name" value="Ribosomal_zn-bd"/>
</dbReference>
<dbReference type="NCBIfam" id="NF001860">
    <property type="entry name" value="PRK00595.1"/>
    <property type="match status" value="1"/>
</dbReference>
<dbReference type="NCBIfam" id="TIGR01023">
    <property type="entry name" value="rpmG_bact"/>
    <property type="match status" value="1"/>
</dbReference>
<dbReference type="PANTHER" id="PTHR15238">
    <property type="entry name" value="54S RIBOSOMAL PROTEIN L39, MITOCHONDRIAL"/>
    <property type="match status" value="1"/>
</dbReference>
<dbReference type="PANTHER" id="PTHR15238:SF1">
    <property type="entry name" value="LARGE RIBOSOMAL SUBUNIT PROTEIN BL33M"/>
    <property type="match status" value="1"/>
</dbReference>
<dbReference type="Pfam" id="PF00471">
    <property type="entry name" value="Ribosomal_L33"/>
    <property type="match status" value="1"/>
</dbReference>
<dbReference type="SUPFAM" id="SSF57829">
    <property type="entry name" value="Zn-binding ribosomal proteins"/>
    <property type="match status" value="1"/>
</dbReference>
<dbReference type="PROSITE" id="PS00582">
    <property type="entry name" value="RIBOSOMAL_L33"/>
    <property type="match status" value="1"/>
</dbReference>
<organism>
    <name type="scientific">Idiomarina loihiensis (strain ATCC BAA-735 / DSM 15497 / L2-TR)</name>
    <dbReference type="NCBI Taxonomy" id="283942"/>
    <lineage>
        <taxon>Bacteria</taxon>
        <taxon>Pseudomonadati</taxon>
        <taxon>Pseudomonadota</taxon>
        <taxon>Gammaproteobacteria</taxon>
        <taxon>Alteromonadales</taxon>
        <taxon>Idiomarinaceae</taxon>
        <taxon>Idiomarina</taxon>
    </lineage>
</organism>
<proteinExistence type="inferred from homology"/>
<reference key="1">
    <citation type="journal article" date="2004" name="Proc. Natl. Acad. Sci. U.S.A.">
        <title>Genome sequence of the deep-sea gamma-proteobacterium Idiomarina loihiensis reveals amino acid fermentation as a source of carbon and energy.</title>
        <authorList>
            <person name="Hou S."/>
            <person name="Saw J.H."/>
            <person name="Lee K.S."/>
            <person name="Freitas T.A."/>
            <person name="Belisle C."/>
            <person name="Kawarabayasi Y."/>
            <person name="Donachie S.P."/>
            <person name="Pikina A."/>
            <person name="Galperin M.Y."/>
            <person name="Koonin E.V."/>
            <person name="Makarova K.S."/>
            <person name="Omelchenko M.V."/>
            <person name="Sorokin A."/>
            <person name="Wolf Y.I."/>
            <person name="Li Q.X."/>
            <person name="Keum Y.S."/>
            <person name="Campbell S."/>
            <person name="Denery J."/>
            <person name="Aizawa S."/>
            <person name="Shibata S."/>
            <person name="Malahoff A."/>
            <person name="Alam M."/>
        </authorList>
    </citation>
    <scope>NUCLEOTIDE SEQUENCE [LARGE SCALE GENOMIC DNA]</scope>
    <source>
        <strain>ATCC BAA-735 / DSM 15497 / L2-TR</strain>
    </source>
</reference>
<evidence type="ECO:0000255" key="1">
    <source>
        <dbReference type="HAMAP-Rule" id="MF_00294"/>
    </source>
</evidence>
<evidence type="ECO:0000305" key="2"/>
<protein>
    <recommendedName>
        <fullName evidence="1">Large ribosomal subunit protein bL33</fullName>
    </recommendedName>
    <alternativeName>
        <fullName evidence="2">50S ribosomal protein L33</fullName>
    </alternativeName>
</protein>
<comment type="similarity">
    <text evidence="1">Belongs to the bacterial ribosomal protein bL33 family.</text>
</comment>